<keyword id="KW-1003">Cell membrane</keyword>
<keyword id="KW-0472">Membrane</keyword>
<keyword id="KW-0812">Transmembrane</keyword>
<keyword id="KW-1133">Transmembrane helix</keyword>
<gene>
    <name type="ordered locus">MGAS2096_Spy0318</name>
</gene>
<accession>Q1JDD8</accession>
<name>Y318_STRPB</name>
<dbReference type="EMBL" id="CP000261">
    <property type="protein sequence ID" value="ABF35370.1"/>
    <property type="molecule type" value="Genomic_DNA"/>
</dbReference>
<dbReference type="SMR" id="Q1JDD8"/>
<dbReference type="KEGG" id="spj:MGAS2096_Spy0318"/>
<dbReference type="HOGENOM" id="CLU_180108_0_0_9"/>
<dbReference type="GO" id="GO:0005886">
    <property type="term" value="C:plasma membrane"/>
    <property type="evidence" value="ECO:0007669"/>
    <property type="project" value="UniProtKB-SubCell"/>
</dbReference>
<dbReference type="HAMAP" id="MF_00363">
    <property type="entry name" value="UPF0154"/>
    <property type="match status" value="1"/>
</dbReference>
<dbReference type="InterPro" id="IPR005359">
    <property type="entry name" value="UPF0154"/>
</dbReference>
<dbReference type="Pfam" id="PF03672">
    <property type="entry name" value="UPF0154"/>
    <property type="match status" value="1"/>
</dbReference>
<protein>
    <recommendedName>
        <fullName evidence="1">UPF0154 protein MGAS2096_Spy0318</fullName>
    </recommendedName>
</protein>
<evidence type="ECO:0000255" key="1">
    <source>
        <dbReference type="HAMAP-Rule" id="MF_00363"/>
    </source>
</evidence>
<comment type="subcellular location">
    <subcellularLocation>
        <location evidence="1">Cell membrane</location>
        <topology evidence="1">Single-pass membrane protein</topology>
    </subcellularLocation>
</comment>
<comment type="similarity">
    <text evidence="1">Belongs to the UPF0154 family.</text>
</comment>
<sequence length="80" mass="8894">MSTAIWILLLIVALGVGVFGGIFIARKQIEKEIGEHPRLTPEAIREMMSQMGQKPSEAKIQQTYRNIIKQSKAAVSKGKK</sequence>
<organism>
    <name type="scientific">Streptococcus pyogenes serotype M12 (strain MGAS2096)</name>
    <dbReference type="NCBI Taxonomy" id="370553"/>
    <lineage>
        <taxon>Bacteria</taxon>
        <taxon>Bacillati</taxon>
        <taxon>Bacillota</taxon>
        <taxon>Bacilli</taxon>
        <taxon>Lactobacillales</taxon>
        <taxon>Streptococcaceae</taxon>
        <taxon>Streptococcus</taxon>
    </lineage>
</organism>
<proteinExistence type="inferred from homology"/>
<feature type="chain" id="PRO_1000005641" description="UPF0154 protein MGAS2096_Spy0318">
    <location>
        <begin position="1"/>
        <end position="80"/>
    </location>
</feature>
<feature type="transmembrane region" description="Helical" evidence="1">
    <location>
        <begin position="4"/>
        <end position="24"/>
    </location>
</feature>
<reference key="1">
    <citation type="journal article" date="2006" name="Proc. Natl. Acad. Sci. U.S.A.">
        <title>Molecular genetic anatomy of inter- and intraserotype variation in the human bacterial pathogen group A Streptococcus.</title>
        <authorList>
            <person name="Beres S.B."/>
            <person name="Richter E.W."/>
            <person name="Nagiec M.J."/>
            <person name="Sumby P."/>
            <person name="Porcella S.F."/>
            <person name="DeLeo F.R."/>
            <person name="Musser J.M."/>
        </authorList>
    </citation>
    <scope>NUCLEOTIDE SEQUENCE [LARGE SCALE GENOMIC DNA]</scope>
    <source>
        <strain>MGAS2096</strain>
    </source>
</reference>